<protein>
    <recommendedName>
        <fullName>Zinc finger CCCH domain-containing protein 4</fullName>
        <shortName>AtC3H4</shortName>
    </recommendedName>
</protein>
<gene>
    <name type="ordered locus">At1g07360</name>
    <name type="ORF">F22G5.30</name>
</gene>
<proteinExistence type="evidence at protein level"/>
<sequence length="481" mass="53588">MAHRILRDHEADGWERSDFPIICESCLGDNPYVRMTKANYDKECKICTRPFTVFRWRPGRDARYKKTEICQTCCKLKNVCQVCLLDLEYGLPVQVRDTALNISTHDSIPKSDVNREYFAEEHDRKARAGLDYESSFGKMRPNDTILKLQRTTPYYKRNRAHVCSFFIRGECTRGAECPYRHEMPETGELSQQNIKDRYYGVNDPVAMKLLGKAGEMGTLESPDDESIKTLYVGGLNSRILEQDIRDQFYAHGEIESIRILADKACAFVTYTSREGAEKAAQELSNRLVINGQRLKLTWGRPKPDQDGANQQGGVAHSGLLPRAVISQQHNQPPPMQQYYMHPPPANQDKPYYPSMDPQRMGAVISTQEAGGSSTENNGASSSSYMMPPHQSYPPPPYGYMPSPYQQQYPPNHHHQPSPMQHYAPPPAAYPYPQQPGPGSRPAPSPTAVSAISPDSAPAGSGAPSGSSQQAPDVSTATGSSQ</sequence>
<evidence type="ECO:0000255" key="1">
    <source>
        <dbReference type="PROSITE-ProRule" id="PRU00176"/>
    </source>
</evidence>
<evidence type="ECO:0000255" key="2">
    <source>
        <dbReference type="PROSITE-ProRule" id="PRU00723"/>
    </source>
</evidence>
<evidence type="ECO:0000256" key="3">
    <source>
        <dbReference type="SAM" id="MobiDB-lite"/>
    </source>
</evidence>
<evidence type="ECO:0000305" key="4"/>
<keyword id="KW-0238">DNA-binding</keyword>
<keyword id="KW-0479">Metal-binding</keyword>
<keyword id="KW-1185">Reference proteome</keyword>
<keyword id="KW-0694">RNA-binding</keyword>
<keyword id="KW-0862">Zinc</keyword>
<keyword id="KW-0863">Zinc-finger</keyword>
<accession>Q9LNV5</accession>
<accession>Q93XZ5</accession>
<reference key="1">
    <citation type="journal article" date="2000" name="Nature">
        <title>Sequence and analysis of chromosome 1 of the plant Arabidopsis thaliana.</title>
        <authorList>
            <person name="Theologis A."/>
            <person name="Ecker J.R."/>
            <person name="Palm C.J."/>
            <person name="Federspiel N.A."/>
            <person name="Kaul S."/>
            <person name="White O."/>
            <person name="Alonso J."/>
            <person name="Altafi H."/>
            <person name="Araujo R."/>
            <person name="Bowman C.L."/>
            <person name="Brooks S.Y."/>
            <person name="Buehler E."/>
            <person name="Chan A."/>
            <person name="Chao Q."/>
            <person name="Chen H."/>
            <person name="Cheuk R.F."/>
            <person name="Chin C.W."/>
            <person name="Chung M.K."/>
            <person name="Conn L."/>
            <person name="Conway A.B."/>
            <person name="Conway A.R."/>
            <person name="Creasy T.H."/>
            <person name="Dewar K."/>
            <person name="Dunn P."/>
            <person name="Etgu P."/>
            <person name="Feldblyum T.V."/>
            <person name="Feng J.-D."/>
            <person name="Fong B."/>
            <person name="Fujii C.Y."/>
            <person name="Gill J.E."/>
            <person name="Goldsmith A.D."/>
            <person name="Haas B."/>
            <person name="Hansen N.F."/>
            <person name="Hughes B."/>
            <person name="Huizar L."/>
            <person name="Hunter J.L."/>
            <person name="Jenkins J."/>
            <person name="Johnson-Hopson C."/>
            <person name="Khan S."/>
            <person name="Khaykin E."/>
            <person name="Kim C.J."/>
            <person name="Koo H.L."/>
            <person name="Kremenetskaia I."/>
            <person name="Kurtz D.B."/>
            <person name="Kwan A."/>
            <person name="Lam B."/>
            <person name="Langin-Hooper S."/>
            <person name="Lee A."/>
            <person name="Lee J.M."/>
            <person name="Lenz C.A."/>
            <person name="Li J.H."/>
            <person name="Li Y.-P."/>
            <person name="Lin X."/>
            <person name="Liu S.X."/>
            <person name="Liu Z.A."/>
            <person name="Luros J.S."/>
            <person name="Maiti R."/>
            <person name="Marziali A."/>
            <person name="Militscher J."/>
            <person name="Miranda M."/>
            <person name="Nguyen M."/>
            <person name="Nierman W.C."/>
            <person name="Osborne B.I."/>
            <person name="Pai G."/>
            <person name="Peterson J."/>
            <person name="Pham P.K."/>
            <person name="Rizzo M."/>
            <person name="Rooney T."/>
            <person name="Rowley D."/>
            <person name="Sakano H."/>
            <person name="Salzberg S.L."/>
            <person name="Schwartz J.R."/>
            <person name="Shinn P."/>
            <person name="Southwick A.M."/>
            <person name="Sun H."/>
            <person name="Tallon L.J."/>
            <person name="Tambunga G."/>
            <person name="Toriumi M.J."/>
            <person name="Town C.D."/>
            <person name="Utterback T."/>
            <person name="Van Aken S."/>
            <person name="Vaysberg M."/>
            <person name="Vysotskaia V.S."/>
            <person name="Walker M."/>
            <person name="Wu D."/>
            <person name="Yu G."/>
            <person name="Fraser C.M."/>
            <person name="Venter J.C."/>
            <person name="Davis R.W."/>
        </authorList>
    </citation>
    <scope>NUCLEOTIDE SEQUENCE [LARGE SCALE GENOMIC DNA]</scope>
    <source>
        <strain>cv. Columbia</strain>
    </source>
</reference>
<reference key="2">
    <citation type="journal article" date="2017" name="Plant J.">
        <title>Araport11: a complete reannotation of the Arabidopsis thaliana reference genome.</title>
        <authorList>
            <person name="Cheng C.Y."/>
            <person name="Krishnakumar V."/>
            <person name="Chan A.P."/>
            <person name="Thibaud-Nissen F."/>
            <person name="Schobel S."/>
            <person name="Town C.D."/>
        </authorList>
    </citation>
    <scope>GENOME REANNOTATION</scope>
    <source>
        <strain>cv. Columbia</strain>
    </source>
</reference>
<reference key="3">
    <citation type="journal article" date="2003" name="Science">
        <title>Empirical analysis of transcriptional activity in the Arabidopsis genome.</title>
        <authorList>
            <person name="Yamada K."/>
            <person name="Lim J."/>
            <person name="Dale J.M."/>
            <person name="Chen H."/>
            <person name="Shinn P."/>
            <person name="Palm C.J."/>
            <person name="Southwick A.M."/>
            <person name="Wu H.C."/>
            <person name="Kim C.J."/>
            <person name="Nguyen M."/>
            <person name="Pham P.K."/>
            <person name="Cheuk R.F."/>
            <person name="Karlin-Newmann G."/>
            <person name="Liu S.X."/>
            <person name="Lam B."/>
            <person name="Sakano H."/>
            <person name="Wu T."/>
            <person name="Yu G."/>
            <person name="Miranda M."/>
            <person name="Quach H.L."/>
            <person name="Tripp M."/>
            <person name="Chang C.H."/>
            <person name="Lee J.M."/>
            <person name="Toriumi M.J."/>
            <person name="Chan M.M."/>
            <person name="Tang C.C."/>
            <person name="Onodera C.S."/>
            <person name="Deng J.M."/>
            <person name="Akiyama K."/>
            <person name="Ansari Y."/>
            <person name="Arakawa T."/>
            <person name="Banh J."/>
            <person name="Banno F."/>
            <person name="Bowser L."/>
            <person name="Brooks S.Y."/>
            <person name="Carninci P."/>
            <person name="Chao Q."/>
            <person name="Choy N."/>
            <person name="Enju A."/>
            <person name="Goldsmith A.D."/>
            <person name="Gurjal M."/>
            <person name="Hansen N.F."/>
            <person name="Hayashizaki Y."/>
            <person name="Johnson-Hopson C."/>
            <person name="Hsuan V.W."/>
            <person name="Iida K."/>
            <person name="Karnes M."/>
            <person name="Khan S."/>
            <person name="Koesema E."/>
            <person name="Ishida J."/>
            <person name="Jiang P.X."/>
            <person name="Jones T."/>
            <person name="Kawai J."/>
            <person name="Kamiya A."/>
            <person name="Meyers C."/>
            <person name="Nakajima M."/>
            <person name="Narusaka M."/>
            <person name="Seki M."/>
            <person name="Sakurai T."/>
            <person name="Satou M."/>
            <person name="Tamse R."/>
            <person name="Vaysberg M."/>
            <person name="Wallender E.K."/>
            <person name="Wong C."/>
            <person name="Yamamura Y."/>
            <person name="Yuan S."/>
            <person name="Shinozaki K."/>
            <person name="Davis R.W."/>
            <person name="Theologis A."/>
            <person name="Ecker J.R."/>
        </authorList>
    </citation>
    <scope>NUCLEOTIDE SEQUENCE [LARGE SCALE MRNA]</scope>
    <source>
        <strain>cv. Columbia</strain>
    </source>
</reference>
<reference key="4">
    <citation type="journal article" date="2008" name="BMC Genomics">
        <title>Genome-wide analysis of CCCH zinc finger family in Arabidopsis and rice.</title>
        <authorList>
            <person name="Wang D."/>
            <person name="Guo Y."/>
            <person name="Wu C."/>
            <person name="Yang G."/>
            <person name="Li Y."/>
            <person name="Zheng C."/>
        </authorList>
    </citation>
    <scope>NOMENCLATURE</scope>
</reference>
<name>C3H4_ARATH</name>
<dbReference type="EMBL" id="AC022464">
    <property type="protein sequence ID" value="AAF79557.1"/>
    <property type="molecule type" value="Genomic_DNA"/>
</dbReference>
<dbReference type="EMBL" id="CP002684">
    <property type="protein sequence ID" value="AEE28114.1"/>
    <property type="molecule type" value="Genomic_DNA"/>
</dbReference>
<dbReference type="EMBL" id="AY054519">
    <property type="protein sequence ID" value="AAK96710.1"/>
    <property type="molecule type" value="mRNA"/>
</dbReference>
<dbReference type="EMBL" id="AY114632">
    <property type="protein sequence ID" value="AAM47951.1"/>
    <property type="molecule type" value="mRNA"/>
</dbReference>
<dbReference type="PIR" id="F86208">
    <property type="entry name" value="F86208"/>
</dbReference>
<dbReference type="RefSeq" id="NP_563788.1">
    <property type="nucleotide sequence ID" value="NM_100610.4"/>
</dbReference>
<dbReference type="SMR" id="Q9LNV5"/>
<dbReference type="BioGRID" id="22489">
    <property type="interactions" value="26"/>
</dbReference>
<dbReference type="FunCoup" id="Q9LNV5">
    <property type="interactions" value="4650"/>
</dbReference>
<dbReference type="IntAct" id="Q9LNV5">
    <property type="interactions" value="23"/>
</dbReference>
<dbReference type="STRING" id="3702.Q9LNV5"/>
<dbReference type="iPTMnet" id="Q9LNV5"/>
<dbReference type="PaxDb" id="3702-AT1G07360.1"/>
<dbReference type="ProteomicsDB" id="240574"/>
<dbReference type="EnsemblPlants" id="AT1G07360.1">
    <property type="protein sequence ID" value="AT1G07360.1"/>
    <property type="gene ID" value="AT1G07360"/>
</dbReference>
<dbReference type="GeneID" id="837248"/>
<dbReference type="Gramene" id="AT1G07360.1">
    <property type="protein sequence ID" value="AT1G07360.1"/>
    <property type="gene ID" value="AT1G07360"/>
</dbReference>
<dbReference type="KEGG" id="ath:AT1G07360"/>
<dbReference type="Araport" id="AT1G07360"/>
<dbReference type="TAIR" id="AT1G07360">
    <property type="gene designation" value="MAC5A"/>
</dbReference>
<dbReference type="eggNOG" id="KOG0153">
    <property type="taxonomic scope" value="Eukaryota"/>
</dbReference>
<dbReference type="HOGENOM" id="CLU_027112_2_0_1"/>
<dbReference type="InParanoid" id="Q9LNV5"/>
<dbReference type="OMA" id="FRHEMPR"/>
<dbReference type="PhylomeDB" id="Q9LNV5"/>
<dbReference type="PRO" id="PR:Q9LNV5"/>
<dbReference type="Proteomes" id="UP000006548">
    <property type="component" value="Chromosome 1"/>
</dbReference>
<dbReference type="ExpressionAtlas" id="Q9LNV5">
    <property type="expression patterns" value="baseline and differential"/>
</dbReference>
<dbReference type="GO" id="GO:0005634">
    <property type="term" value="C:nucleus"/>
    <property type="evidence" value="ECO:0000314"/>
    <property type="project" value="TAIR"/>
</dbReference>
<dbReference type="GO" id="GO:0003677">
    <property type="term" value="F:DNA binding"/>
    <property type="evidence" value="ECO:0007669"/>
    <property type="project" value="UniProtKB-KW"/>
</dbReference>
<dbReference type="GO" id="GO:0003729">
    <property type="term" value="F:mRNA binding"/>
    <property type="evidence" value="ECO:0000314"/>
    <property type="project" value="TAIR"/>
</dbReference>
<dbReference type="GO" id="GO:0008270">
    <property type="term" value="F:zinc ion binding"/>
    <property type="evidence" value="ECO:0007669"/>
    <property type="project" value="UniProtKB-KW"/>
</dbReference>
<dbReference type="GO" id="GO:0042742">
    <property type="term" value="P:defense response to bacterium"/>
    <property type="evidence" value="ECO:0000316"/>
    <property type="project" value="TAIR"/>
</dbReference>
<dbReference type="CDD" id="cd12224">
    <property type="entry name" value="RRM_RBM22"/>
    <property type="match status" value="1"/>
</dbReference>
<dbReference type="FunFam" id="3.30.70.330:FF:000476">
    <property type="entry name" value="Zinc finger CCCH domain-containing protein 4"/>
    <property type="match status" value="1"/>
</dbReference>
<dbReference type="FunFam" id="4.10.1000.10:FF:000036">
    <property type="entry name" value="Zinc finger CCCH domain-containing protein 4"/>
    <property type="match status" value="1"/>
</dbReference>
<dbReference type="Gene3D" id="3.30.70.330">
    <property type="match status" value="1"/>
</dbReference>
<dbReference type="Gene3D" id="4.10.1000.10">
    <property type="entry name" value="Zinc finger, CCCH-type"/>
    <property type="match status" value="1"/>
</dbReference>
<dbReference type="InterPro" id="IPR039171">
    <property type="entry name" value="Cwc2/Slt11"/>
</dbReference>
<dbReference type="InterPro" id="IPR012677">
    <property type="entry name" value="Nucleotide-bd_a/b_plait_sf"/>
</dbReference>
<dbReference type="InterPro" id="IPR035979">
    <property type="entry name" value="RBD_domain_sf"/>
</dbReference>
<dbReference type="InterPro" id="IPR000504">
    <property type="entry name" value="RRM_dom"/>
</dbReference>
<dbReference type="InterPro" id="IPR048995">
    <property type="entry name" value="STL11/RBM22-like_N"/>
</dbReference>
<dbReference type="InterPro" id="IPR032297">
    <property type="entry name" value="Torus"/>
</dbReference>
<dbReference type="InterPro" id="IPR000571">
    <property type="entry name" value="Znf_CCCH"/>
</dbReference>
<dbReference type="InterPro" id="IPR036855">
    <property type="entry name" value="Znf_CCCH_sf"/>
</dbReference>
<dbReference type="PANTHER" id="PTHR14089">
    <property type="entry name" value="PRE-MRNA-SPLICING FACTOR RBM22"/>
    <property type="match status" value="1"/>
</dbReference>
<dbReference type="PANTHER" id="PTHR14089:SF12">
    <property type="entry name" value="ZINC FINGER CCCH DOMAIN-CONTAINING PROTEIN 4-RELATED"/>
    <property type="match status" value="1"/>
</dbReference>
<dbReference type="Pfam" id="PF00076">
    <property type="entry name" value="RRM_1"/>
    <property type="match status" value="1"/>
</dbReference>
<dbReference type="Pfam" id="PF21369">
    <property type="entry name" value="STL11_N"/>
    <property type="match status" value="1"/>
</dbReference>
<dbReference type="Pfam" id="PF16131">
    <property type="entry name" value="Torus"/>
    <property type="match status" value="1"/>
</dbReference>
<dbReference type="SMART" id="SM00360">
    <property type="entry name" value="RRM"/>
    <property type="match status" value="1"/>
</dbReference>
<dbReference type="SMART" id="SM00356">
    <property type="entry name" value="ZnF_C3H1"/>
    <property type="match status" value="1"/>
</dbReference>
<dbReference type="SUPFAM" id="SSF90229">
    <property type="entry name" value="CCCH zinc finger"/>
    <property type="match status" value="1"/>
</dbReference>
<dbReference type="SUPFAM" id="SSF54928">
    <property type="entry name" value="RNA-binding domain, RBD"/>
    <property type="match status" value="1"/>
</dbReference>
<dbReference type="PROSITE" id="PS50102">
    <property type="entry name" value="RRM"/>
    <property type="match status" value="1"/>
</dbReference>
<dbReference type="PROSITE" id="PS50103">
    <property type="entry name" value="ZF_C3H1"/>
    <property type="match status" value="1"/>
</dbReference>
<comment type="interaction">
    <interactant intactId="EBI-2430550">
        <id>Q9LNV5</id>
    </interactant>
    <interactant intactId="EBI-1775648">
        <id>Q0WPF2</id>
        <label>PCFS4</label>
    </interactant>
    <organismsDiffer>false</organismsDiffer>
    <experiments>3</experiments>
</comment>
<comment type="interaction">
    <interactant intactId="EBI-2430550">
        <id>Q9LNV5</id>
    </interactant>
    <interactant intactId="EBI-4424877">
        <id>Q9S7W5</id>
        <label>TCP13</label>
    </interactant>
    <organismsDiffer>false</organismsDiffer>
    <experiments>3</experiments>
</comment>
<comment type="interaction">
    <interactant intactId="EBI-2430550">
        <id>Q9LNV5</id>
    </interactant>
    <interactant intactId="EBI-4426144">
        <id>Q9C9L2</id>
        <label>TCP15</label>
    </interactant>
    <organismsDiffer>false</organismsDiffer>
    <experiments>3</experiments>
</comment>
<feature type="chain" id="PRO_0000371965" description="Zinc finger CCCH domain-containing protein 4">
    <location>
        <begin position="1"/>
        <end position="481"/>
    </location>
</feature>
<feature type="domain" description="RRM" evidence="1">
    <location>
        <begin position="228"/>
        <end position="301"/>
    </location>
</feature>
<feature type="zinc finger region" description="C3H1-type" evidence="2">
    <location>
        <begin position="157"/>
        <end position="184"/>
    </location>
</feature>
<feature type="region of interest" description="Disordered" evidence="3">
    <location>
        <begin position="329"/>
        <end position="481"/>
    </location>
</feature>
<feature type="compositionally biased region" description="Pro residues" evidence="3">
    <location>
        <begin position="331"/>
        <end position="345"/>
    </location>
</feature>
<feature type="compositionally biased region" description="Low complexity" evidence="3">
    <location>
        <begin position="369"/>
        <end position="389"/>
    </location>
</feature>
<feature type="compositionally biased region" description="Low complexity" evidence="3">
    <location>
        <begin position="399"/>
        <end position="410"/>
    </location>
</feature>
<feature type="compositionally biased region" description="Pro residues" evidence="3">
    <location>
        <begin position="423"/>
        <end position="444"/>
    </location>
</feature>
<feature type="compositionally biased region" description="Low complexity" evidence="3">
    <location>
        <begin position="449"/>
        <end position="471"/>
    </location>
</feature>
<feature type="compositionally biased region" description="Polar residues" evidence="3">
    <location>
        <begin position="472"/>
        <end position="481"/>
    </location>
</feature>
<feature type="sequence conflict" description="In Ref. 3; AAM47951/AAK96710." evidence="4" ref="3">
    <original>Q</original>
    <variation>R</variation>
    <location>
        <position position="305"/>
    </location>
</feature>
<organism>
    <name type="scientific">Arabidopsis thaliana</name>
    <name type="common">Mouse-ear cress</name>
    <dbReference type="NCBI Taxonomy" id="3702"/>
    <lineage>
        <taxon>Eukaryota</taxon>
        <taxon>Viridiplantae</taxon>
        <taxon>Streptophyta</taxon>
        <taxon>Embryophyta</taxon>
        <taxon>Tracheophyta</taxon>
        <taxon>Spermatophyta</taxon>
        <taxon>Magnoliopsida</taxon>
        <taxon>eudicotyledons</taxon>
        <taxon>Gunneridae</taxon>
        <taxon>Pentapetalae</taxon>
        <taxon>rosids</taxon>
        <taxon>malvids</taxon>
        <taxon>Brassicales</taxon>
        <taxon>Brassicaceae</taxon>
        <taxon>Camelineae</taxon>
        <taxon>Arabidopsis</taxon>
    </lineage>
</organism>